<name>THD1_CICAR</name>
<keyword id="KW-0021">Allosteric enzyme</keyword>
<keyword id="KW-0028">Amino-acid biosynthesis</keyword>
<keyword id="KW-0100">Branched-chain amino acid biosynthesis</keyword>
<keyword id="KW-0150">Chloroplast</keyword>
<keyword id="KW-0412">Isoleucine biosynthesis</keyword>
<keyword id="KW-0456">Lyase</keyword>
<keyword id="KW-0934">Plastid</keyword>
<keyword id="KW-0663">Pyridoxal phosphate</keyword>
<keyword id="KW-1185">Reference proteome</keyword>
<keyword id="KW-0677">Repeat</keyword>
<keyword id="KW-0809">Transit peptide</keyword>
<organism>
    <name type="scientific">Cicer arietinum</name>
    <name type="common">Chickpea</name>
    <name type="synonym">Garbanzo</name>
    <dbReference type="NCBI Taxonomy" id="3827"/>
    <lineage>
        <taxon>Eukaryota</taxon>
        <taxon>Viridiplantae</taxon>
        <taxon>Streptophyta</taxon>
        <taxon>Embryophyta</taxon>
        <taxon>Tracheophyta</taxon>
        <taxon>Spermatophyta</taxon>
        <taxon>Magnoliopsida</taxon>
        <taxon>eudicotyledons</taxon>
        <taxon>Gunneridae</taxon>
        <taxon>Pentapetalae</taxon>
        <taxon>rosids</taxon>
        <taxon>fabids</taxon>
        <taxon>Fabales</taxon>
        <taxon>Fabaceae</taxon>
        <taxon>Papilionoideae</taxon>
        <taxon>50 kb inversion clade</taxon>
        <taxon>NPAAA clade</taxon>
        <taxon>Hologalegina</taxon>
        <taxon>IRL clade</taxon>
        <taxon>Cicereae</taxon>
        <taxon>Cicer</taxon>
    </lineage>
</organism>
<protein>
    <recommendedName>
        <fullName>Threonine dehydratase biosynthetic, chloroplastic</fullName>
        <ecNumber>4.3.1.19</ecNumber>
    </recommendedName>
    <alternativeName>
        <fullName>Threonine deaminase</fullName>
        <shortName>TD</shortName>
    </alternativeName>
</protein>
<comment type="catalytic activity">
    <reaction>
        <text>L-threonine = 2-oxobutanoate + NH4(+)</text>
        <dbReference type="Rhea" id="RHEA:22108"/>
        <dbReference type="ChEBI" id="CHEBI:16763"/>
        <dbReference type="ChEBI" id="CHEBI:28938"/>
        <dbReference type="ChEBI" id="CHEBI:57926"/>
        <dbReference type="EC" id="4.3.1.19"/>
    </reaction>
</comment>
<comment type="cofactor">
    <cofactor evidence="1">
        <name>pyridoxal 5'-phosphate</name>
        <dbReference type="ChEBI" id="CHEBI:597326"/>
    </cofactor>
</comment>
<comment type="activity regulation">
    <text evidence="1">Allosterically inhibited by isoleucine.</text>
</comment>
<comment type="pathway">
    <text>Amino-acid biosynthesis; L-isoleucine biosynthesis; 2-oxobutanoate from L-threonine: step 1/1.</text>
</comment>
<comment type="subcellular location">
    <subcellularLocation>
        <location evidence="1">Plastid</location>
        <location evidence="1">Chloroplast</location>
    </subcellularLocation>
</comment>
<comment type="tissue specificity">
    <text>Found at higher levels in flowers than in other organs.</text>
</comment>
<comment type="similarity">
    <text evidence="4">Belongs to the serine/threonine dehydratase family.</text>
</comment>
<accession>Q39469</accession>
<feature type="transit peptide" description="Chloroplast" evidence="2">
    <location>
        <begin position="1"/>
        <end position="44"/>
    </location>
</feature>
<feature type="chain" id="PRO_0000033613" description="Threonine dehydratase biosynthetic, chloroplastic">
    <location>
        <begin position="45"/>
        <end position="590"/>
    </location>
</feature>
<feature type="domain" description="ACT-like 1" evidence="3">
    <location>
        <begin position="416"/>
        <end position="488"/>
    </location>
</feature>
<feature type="domain" description="ACT-like 2" evidence="3">
    <location>
        <begin position="509"/>
        <end position="580"/>
    </location>
</feature>
<feature type="modified residue" description="N6-(pyridoxal phosphate)lysine" evidence="1">
    <location>
        <position position="139"/>
    </location>
</feature>
<reference key="1">
    <citation type="journal article" date="1995" name="Plant Physiol.">
        <title>Cloning and sequencing of chickpea cDNA coding for threonine deaminase.</title>
        <authorList>
            <person name="John S.J."/>
            <person name="Srivastava V."/>
            <person name="Guha-Mukherjee S."/>
        </authorList>
    </citation>
    <scope>NUCLEOTIDE SEQUENCE [MRNA]</scope>
    <source>
        <strain>cv. Pusa 261 / PCITD 2</strain>
        <tissue>Seed</tissue>
    </source>
</reference>
<proteinExistence type="evidence at transcript level"/>
<dbReference type="EC" id="4.3.1.19"/>
<dbReference type="EMBL" id="X78575">
    <property type="protein sequence ID" value="CAA55313.1"/>
    <property type="molecule type" value="mRNA"/>
</dbReference>
<dbReference type="PIR" id="T09532">
    <property type="entry name" value="T09532"/>
</dbReference>
<dbReference type="SMR" id="Q39469"/>
<dbReference type="STRING" id="3827.Q39469"/>
<dbReference type="UniPathway" id="UPA00047">
    <property type="reaction ID" value="UER00054"/>
</dbReference>
<dbReference type="Proteomes" id="UP000087171">
    <property type="component" value="Unplaced"/>
</dbReference>
<dbReference type="GO" id="GO:0009507">
    <property type="term" value="C:chloroplast"/>
    <property type="evidence" value="ECO:0007669"/>
    <property type="project" value="UniProtKB-SubCell"/>
</dbReference>
<dbReference type="GO" id="GO:0003941">
    <property type="term" value="F:L-serine ammonia-lyase activity"/>
    <property type="evidence" value="ECO:0007669"/>
    <property type="project" value="TreeGrafter"/>
</dbReference>
<dbReference type="GO" id="GO:0004794">
    <property type="term" value="F:threonine deaminase activity"/>
    <property type="evidence" value="ECO:0007669"/>
    <property type="project" value="UniProtKB-EC"/>
</dbReference>
<dbReference type="GO" id="GO:0009097">
    <property type="term" value="P:isoleucine biosynthetic process"/>
    <property type="evidence" value="ECO:0007669"/>
    <property type="project" value="UniProtKB-UniPathway"/>
</dbReference>
<dbReference type="GO" id="GO:0006565">
    <property type="term" value="P:L-serine catabolic process"/>
    <property type="evidence" value="ECO:0007669"/>
    <property type="project" value="TreeGrafter"/>
</dbReference>
<dbReference type="GO" id="GO:0006567">
    <property type="term" value="P:threonine catabolic process"/>
    <property type="evidence" value="ECO:0007669"/>
    <property type="project" value="TreeGrafter"/>
</dbReference>
<dbReference type="CDD" id="cd04907">
    <property type="entry name" value="ACT_ThrD-I_2"/>
    <property type="match status" value="1"/>
</dbReference>
<dbReference type="CDD" id="cd01562">
    <property type="entry name" value="Thr-dehyd"/>
    <property type="match status" value="1"/>
</dbReference>
<dbReference type="FunFam" id="3.40.50.1100:FF:000005">
    <property type="entry name" value="Threonine dehydratase catabolic"/>
    <property type="match status" value="1"/>
</dbReference>
<dbReference type="Gene3D" id="3.40.50.1100">
    <property type="match status" value="2"/>
</dbReference>
<dbReference type="Gene3D" id="3.40.1020.10">
    <property type="entry name" value="Biosynthetic Threonine Deaminase, Domain 3"/>
    <property type="match status" value="1"/>
</dbReference>
<dbReference type="InterPro" id="IPR045865">
    <property type="entry name" value="ACT-like_dom_sf"/>
</dbReference>
<dbReference type="InterPro" id="IPR050147">
    <property type="entry name" value="Ser/Thr_Dehydratase"/>
</dbReference>
<dbReference type="InterPro" id="IPR001721">
    <property type="entry name" value="TD_ACT-like"/>
</dbReference>
<dbReference type="InterPro" id="IPR038110">
    <property type="entry name" value="TD_ACT-like_sf"/>
</dbReference>
<dbReference type="InterPro" id="IPR005787">
    <property type="entry name" value="Thr_deHydtase_biosynth"/>
</dbReference>
<dbReference type="InterPro" id="IPR001926">
    <property type="entry name" value="TrpB-like_PALP"/>
</dbReference>
<dbReference type="InterPro" id="IPR036052">
    <property type="entry name" value="TrpB-like_PALP_sf"/>
</dbReference>
<dbReference type="NCBIfam" id="TIGR01124">
    <property type="entry name" value="ilvA_2Cterm"/>
    <property type="match status" value="1"/>
</dbReference>
<dbReference type="PANTHER" id="PTHR48078:SF10">
    <property type="entry name" value="THREONINE DEHYDRATASE 2 BIOSYNTHETIC, CHLOROPLASTIC"/>
    <property type="match status" value="1"/>
</dbReference>
<dbReference type="PANTHER" id="PTHR48078">
    <property type="entry name" value="THREONINE DEHYDRATASE, MITOCHONDRIAL-RELATED"/>
    <property type="match status" value="1"/>
</dbReference>
<dbReference type="Pfam" id="PF00291">
    <property type="entry name" value="PALP"/>
    <property type="match status" value="1"/>
</dbReference>
<dbReference type="Pfam" id="PF00585">
    <property type="entry name" value="Thr_dehydrat_C"/>
    <property type="match status" value="2"/>
</dbReference>
<dbReference type="SUPFAM" id="SSF55021">
    <property type="entry name" value="ACT-like"/>
    <property type="match status" value="2"/>
</dbReference>
<dbReference type="SUPFAM" id="SSF53686">
    <property type="entry name" value="Tryptophan synthase beta subunit-like PLP-dependent enzymes"/>
    <property type="match status" value="1"/>
</dbReference>
<dbReference type="PROSITE" id="PS51672">
    <property type="entry name" value="ACT_LIKE"/>
    <property type="match status" value="2"/>
</dbReference>
<sequence length="590" mass="65153">MLSTSTTNSSILPFRSRASSSTFIARPPANFNSIFTTSVRVFPISMSRYCVFPHTWERDHNVPGVPGVLRKVVPAAPIKNKPTCADSDELPEYLRDVLRSPVYDVVVESPVELTERLSDRLGVNFYVKREDRQRVFSFKLRGPYNMMSSLSHEEIDKGVITASAGNHAQGVPFPFPGRRLKCVAKIVMPTTTPNIKLDGVRALGADVVLWGHTFDEAKTHAVELCEKDGLRTIPPFEDPAVIKGQGTIGSEINRQIKRIDAVFVPVGGGGLIAGVAAFFKQIAPQTKIIVVEPYDAASMALSVHAEHRAKLSNVDTFADGATVAVIGEYTFARCQDVVDAMVLVANDGIGAAIKDVFDEGRNIVETSGAAGIAGMYCEMYRIKNDNMVGIVSGANMNFRKLHKVSELAVLGSGHEALLGTYMPGQKGCFKTMAGLVHGSLSFTEITYRFTSHRRSILVLMLKLEPWRYIEKMIEMMKYSGVTVLNISHNELAVIHGKHLVGGSAKVSDEVFVEFIIPEKADLKKFLEVLSPHWNLTLYRYRNQGDLKATILMVIASFLCEIVIRKNQIDDLGYPYEIDQYNDAFNLAVTE</sequence>
<evidence type="ECO:0000250" key="1"/>
<evidence type="ECO:0000255" key="2"/>
<evidence type="ECO:0000255" key="3">
    <source>
        <dbReference type="PROSITE-ProRule" id="PRU01008"/>
    </source>
</evidence>
<evidence type="ECO:0000305" key="4"/>